<evidence type="ECO:0000250" key="1">
    <source>
        <dbReference type="UniProtKB" id="P07911"/>
    </source>
</evidence>
<evidence type="ECO:0000250" key="2">
    <source>
        <dbReference type="UniProtKB" id="P19218"/>
    </source>
</evidence>
<evidence type="ECO:0000250" key="3">
    <source>
        <dbReference type="UniProtKB" id="P55259"/>
    </source>
</evidence>
<evidence type="ECO:0000250" key="4">
    <source>
        <dbReference type="UniProtKB" id="Q9D733"/>
    </source>
</evidence>
<evidence type="ECO:0000255" key="5"/>
<evidence type="ECO:0000255" key="6">
    <source>
        <dbReference type="PROSITE-ProRule" id="PRU00076"/>
    </source>
</evidence>
<evidence type="ECO:0000255" key="7">
    <source>
        <dbReference type="PROSITE-ProRule" id="PRU00375"/>
    </source>
</evidence>
<evidence type="ECO:0000269" key="8">
    <source>
    </source>
</evidence>
<evidence type="ECO:0000269" key="9">
    <source>
    </source>
</evidence>
<evidence type="ECO:0000303" key="10">
    <source>
    </source>
</evidence>
<evidence type="ECO:0000305" key="11"/>
<evidence type="ECO:0000305" key="12">
    <source>
    </source>
</evidence>
<sequence>MVGSYVLWLALASCILTLASPEQQGNRNLINTRSYDPCQNYTLLDEPSRSTENTEGSQVCDKDKHGWYRFVGDGGVRMPETCVPMYRCQTDAPLWLNGTHPTLAEGIVNRTACAHWSGNCCLWKTVVQVKACPGEFHVYRLEGTPKCSLRYCTDASTATDKCKNLCRPEEACSFLNGTWDCFCRSDLNSSDVHSLQPRLNCGAKEIQVSLDKCQLGGLGFGDEVIAYLRDWNCSNMMQREERNWISVTSPTQARACGNILERNGTHAIYKNTLSLANEFIIRDTILNINFQCAYPLDMKVSLQTALHPIVSSLNISVDGEGEFTVRMALFQDQSYISPYEGAAAVLAVESMLYVGAILEKGDTSRFNLLLRNCYATPTKDKTDPVKYFIIRNSCPNQYDSTIHVEENGVSSESRFSVQMFMFAGNYDLVFLHCEIHLCDSLNEQCQPCCSRSQQRSEIVALNPARVLDLGPITRRSSASVDITDGTPSTAGFLLAWPMLLLPILLAELF</sequence>
<accession>P25291</accession>
<protein>
    <recommendedName>
        <fullName evidence="12">Pancreatic secretory granule membrane major glycoprotein GP2</fullName>
    </recommendedName>
    <alternativeName>
        <fullName evidence="12">Pancreatic zymogen granule membrane protein GP-2</fullName>
    </alternativeName>
    <alternativeName>
        <fullName evidence="10">ZAP75</fullName>
    </alternativeName>
</protein>
<comment type="function">
    <text evidence="4">Functions as an intestinal M-cell transcytotic receptor specific of type-I-piliated bacteria that participates in the mucosal immune response toward these bacteria. At the apical membrane of M-cells it binds fimH, a protein of the bacteria type I pilus tip. Internalizes bound bacteria, like E.coli and S.typhimurium, from the lumen of the intestine and delivers them, through M-cells, to the underlying organized lymphoid follicles where they are captured by antigen-presenting dendritic cells to elicit a mucosal immune response.</text>
</comment>
<comment type="subunit">
    <text evidence="2">Interacts with SYCN. Interacts with bacterial adhesin fimH.</text>
</comment>
<comment type="subcellular location">
    <subcellularLocation>
        <location evidence="8">Zymogen granule membrane</location>
        <topology evidence="8">Lipid-anchor</topology>
        <topology evidence="8">GPI-anchor</topology>
    </subcellularLocation>
    <subcellularLocation>
        <location evidence="8">Secreted</location>
    </subcellularLocation>
    <subcellularLocation>
        <location evidence="8">Cell membrane</location>
        <topology evidence="8">Lipid-anchor</topology>
        <topology evidence="8">GPI-anchor</topology>
    </subcellularLocation>
    <subcellularLocation>
        <location evidence="12">Apical cell membrane</location>
        <topology evidence="8">Lipid-anchor</topology>
        <topology evidence="8">GPI-anchor</topology>
    </subcellularLocation>
    <subcellularLocation>
        <location evidence="2">Membrane raft</location>
        <topology evidence="8">Lipid-anchor</topology>
        <topology evidence="8">GPI-anchor</topology>
    </subcellularLocation>
    <subcellularLocation>
        <location evidence="4">Endosome</location>
    </subcellularLocation>
    <text evidence="8">Secreted, after cleavage, in the pancreatic juice.</text>
</comment>
<comment type="tissue specificity">
    <text evidence="8">Expressed in pancreas.</text>
</comment>
<comment type="domain">
    <text evidence="1">Each ZP domain consists of an N-terminal (ZP-N) and C-terminal (ZP-C) region connected by a flexible linker; the linker allows the ZP domain to wrap around the ZP-C subdomain of the preceding subunit.</text>
</comment>
<comment type="PTM">
    <text evidence="8">N-glycosylated.</text>
</comment>
<reference key="1">
    <citation type="journal article" date="1991" name="Proc. Natl. Acad. Sci. U.S.A.">
        <title>A single gene encodes membrane-bound and free forms of GP-2, the major glycoprotein in pancreatic secretory (zymogen) granule membranes.</title>
        <authorList>
            <person name="Fukuoka S."/>
            <person name="Freedman S.D."/>
            <person name="Scheele G.A."/>
        </authorList>
    </citation>
    <scope>NUCLEOTIDE SEQUENCE [MRNA]</scope>
    <scope>PROTEIN SEQUENCE OF 22-39; 243-254 AND 456-474</scope>
    <scope>SUBCELLULAR LOCATION</scope>
    <scope>TOPOLOGY</scope>
    <scope>GLYCOSYLATION</scope>
    <scope>TISSUE SPECIFICITY</scope>
    <scope>SIGNAL PEPTIDE</scope>
    <source>
        <tissue>Pancreas</tissue>
    </source>
</reference>
<reference key="2">
    <citation type="journal article" date="1994" name="Biosci. Biotechnol. Biochem.">
        <title>Analysis of ZAPs, zymogen granule membrane associated proteins, in the regulated exocytosis of the pancreas.</title>
        <authorList>
            <person name="Fukuoka S."/>
        </authorList>
    </citation>
    <scope>PROTEIN SEQUENCE OF 22-32</scope>
</reference>
<feature type="signal peptide" evidence="8 9">
    <location>
        <begin position="1"/>
        <end position="21"/>
    </location>
</feature>
<feature type="chain" id="PRO_0000041655" description="Pancreatic secretory granule membrane major glycoprotein GP2">
    <location>
        <begin position="22"/>
        <end position="484"/>
    </location>
</feature>
<feature type="propeptide" id="PRO_0000041656" description="Removed in mature form" evidence="5">
    <location>
        <begin position="485"/>
        <end position="509"/>
    </location>
</feature>
<feature type="domain" description="EGF-like" evidence="11">
    <location>
        <begin position="158"/>
        <end position="202"/>
    </location>
</feature>
<feature type="domain" description="ZP" evidence="7">
    <location>
        <begin position="200"/>
        <end position="456"/>
    </location>
</feature>
<feature type="region of interest" description="D10C" evidence="3">
    <location>
        <begin position="36"/>
        <end position="56"/>
    </location>
</feature>
<feature type="region of interest" description="ZP-N" evidence="1">
    <location>
        <begin position="200"/>
        <end position="293"/>
    </location>
</feature>
<feature type="region of interest" description="Flexible ZP-N/ZP-C linker" evidence="1">
    <location>
        <begin position="294"/>
        <end position="317"/>
    </location>
</feature>
<feature type="region of interest" description="ZP-C" evidence="1">
    <location>
        <begin position="318"/>
        <end position="456"/>
    </location>
</feature>
<feature type="region of interest" description="Internal hydrophobic patch (IHP)" evidence="1">
    <location>
        <begin position="318"/>
        <end position="329"/>
    </location>
</feature>
<feature type="region of interest" description="External hydrophobic patch (EHP)" evidence="1">
    <location>
        <begin position="463"/>
        <end position="471"/>
    </location>
</feature>
<feature type="lipid moiety-binding region" description="GPI-anchor amidated aspartate" evidence="5">
    <location>
        <position position="484"/>
    </location>
</feature>
<feature type="glycosylation site" description="N-linked (GlcNAc...) asparagine" evidence="5">
    <location>
        <position position="40"/>
    </location>
</feature>
<feature type="glycosylation site" description="N-linked (GlcNAc...) asparagine" evidence="5">
    <location>
        <position position="97"/>
    </location>
</feature>
<feature type="glycosylation site" description="N-linked (GlcNAc...) asparagine" evidence="5">
    <location>
        <position position="109"/>
    </location>
</feature>
<feature type="glycosylation site" description="N-linked (GlcNAc...) asparagine" evidence="5">
    <location>
        <position position="176"/>
    </location>
</feature>
<feature type="glycosylation site" description="N-linked (GlcNAc...) asparagine" evidence="5">
    <location>
        <position position="188"/>
    </location>
</feature>
<feature type="glycosylation site" description="N-linked (GlcNAc...) asparagine" evidence="5">
    <location>
        <position position="232"/>
    </location>
</feature>
<feature type="glycosylation site" description="N-linked (GlcNAc...) asparagine" evidence="5">
    <location>
        <position position="263"/>
    </location>
</feature>
<feature type="glycosylation site" description="N-linked (GlcNAc...) asparagine" evidence="5">
    <location>
        <position position="314"/>
    </location>
</feature>
<feature type="disulfide bond" evidence="3">
    <location>
        <begin position="38"/>
        <end position="132"/>
    </location>
</feature>
<feature type="disulfide bond" evidence="3">
    <location>
        <begin position="60"/>
        <end position="147"/>
    </location>
</feature>
<feature type="disulfide bond" evidence="3">
    <location>
        <begin position="82"/>
        <end position="120"/>
    </location>
</feature>
<feature type="disulfide bond" evidence="3">
    <location>
        <begin position="88"/>
        <end position="152"/>
    </location>
</feature>
<feature type="disulfide bond" evidence="3">
    <location>
        <begin position="113"/>
        <end position="121"/>
    </location>
</feature>
<feature type="disulfide bond" evidence="1">
    <location>
        <begin position="162"/>
        <end position="172"/>
    </location>
</feature>
<feature type="disulfide bond" evidence="1">
    <location>
        <begin position="166"/>
        <end position="181"/>
    </location>
</feature>
<feature type="disulfide bond" evidence="1">
    <location>
        <begin position="183"/>
        <end position="213"/>
    </location>
</feature>
<feature type="disulfide bond" evidence="1">
    <location>
        <begin position="201"/>
        <end position="292"/>
    </location>
</feature>
<feature type="disulfide bond" evidence="1">
    <location>
        <begin position="233"/>
        <end position="256"/>
    </location>
</feature>
<feature type="disulfide bond" evidence="1 6">
    <location>
        <begin position="373"/>
        <end position="433"/>
    </location>
</feature>
<feature type="disulfide bond" evidence="1">
    <location>
        <begin position="394"/>
        <end position="449"/>
    </location>
</feature>
<feature type="disulfide bond" evidence="1">
    <location>
        <begin position="438"/>
        <end position="445"/>
    </location>
</feature>
<feature type="sequence conflict" description="In Ref. 1; AA sequence." evidence="11" ref="1">
    <original>S</original>
    <variation>D</variation>
    <location>
        <position position="246"/>
    </location>
</feature>
<feature type="sequence conflict" description="In Ref. 1; AA sequence." evidence="11" ref="1">
    <original>S</original>
    <variation>D</variation>
    <location>
        <position position="249"/>
    </location>
</feature>
<feature type="sequence conflict" description="In Ref. 1; AA sequence." evidence="11" ref="1">
    <original>L</original>
    <variation>I</variation>
    <location>
        <position position="461"/>
    </location>
</feature>
<proteinExistence type="evidence at protein level"/>
<name>GP2_CANLF</name>
<dbReference type="EMBL" id="M64083">
    <property type="protein sequence ID" value="AAA30904.1"/>
    <property type="molecule type" value="mRNA"/>
</dbReference>
<dbReference type="PIR" id="A37259">
    <property type="entry name" value="A37259"/>
</dbReference>
<dbReference type="SMR" id="P25291"/>
<dbReference type="FunCoup" id="P25291">
    <property type="interactions" value="15"/>
</dbReference>
<dbReference type="STRING" id="9615.ENSCAFP00000026630"/>
<dbReference type="GlyCosmos" id="P25291">
    <property type="glycosylation" value="8 sites, No reported glycans"/>
</dbReference>
<dbReference type="PaxDb" id="9612-ENSCAFP00000030927"/>
<dbReference type="eggNOG" id="ENOG502QT6B">
    <property type="taxonomic scope" value="Eukaryota"/>
</dbReference>
<dbReference type="InParanoid" id="P25291"/>
<dbReference type="OrthoDB" id="9987373at2759"/>
<dbReference type="Proteomes" id="UP000002254">
    <property type="component" value="Unplaced"/>
</dbReference>
<dbReference type="Proteomes" id="UP000694429">
    <property type="component" value="Unplaced"/>
</dbReference>
<dbReference type="Proteomes" id="UP000694542">
    <property type="component" value="Unplaced"/>
</dbReference>
<dbReference type="Proteomes" id="UP000805418">
    <property type="component" value="Unplaced"/>
</dbReference>
<dbReference type="GO" id="GO:0016324">
    <property type="term" value="C:apical plasma membrane"/>
    <property type="evidence" value="ECO:0000250"/>
    <property type="project" value="UniProtKB"/>
</dbReference>
<dbReference type="GO" id="GO:0009986">
    <property type="term" value="C:cell surface"/>
    <property type="evidence" value="ECO:0000318"/>
    <property type="project" value="GO_Central"/>
</dbReference>
<dbReference type="GO" id="GO:0005768">
    <property type="term" value="C:endosome"/>
    <property type="evidence" value="ECO:0000250"/>
    <property type="project" value="UniProtKB"/>
</dbReference>
<dbReference type="GO" id="GO:0009897">
    <property type="term" value="C:external side of plasma membrane"/>
    <property type="evidence" value="ECO:0000314"/>
    <property type="project" value="UniProtKB"/>
</dbReference>
<dbReference type="GO" id="GO:0005615">
    <property type="term" value="C:extracellular space"/>
    <property type="evidence" value="ECO:0000314"/>
    <property type="project" value="UniProtKB"/>
</dbReference>
<dbReference type="GO" id="GO:0045121">
    <property type="term" value="C:membrane raft"/>
    <property type="evidence" value="ECO:0007669"/>
    <property type="project" value="UniProtKB-SubCell"/>
</dbReference>
<dbReference type="GO" id="GO:0042589">
    <property type="term" value="C:zymogen granule membrane"/>
    <property type="evidence" value="ECO:0000314"/>
    <property type="project" value="UniProtKB"/>
</dbReference>
<dbReference type="GO" id="GO:0002412">
    <property type="term" value="P:antigen transcytosis by M cells in mucosal-associated lymphoid tissue"/>
    <property type="evidence" value="ECO:0000250"/>
    <property type="project" value="UniProtKB"/>
</dbReference>
<dbReference type="GO" id="GO:0045087">
    <property type="term" value="P:innate immune response"/>
    <property type="evidence" value="ECO:0007669"/>
    <property type="project" value="UniProtKB-KW"/>
</dbReference>
<dbReference type="GO" id="GO:1990266">
    <property type="term" value="P:neutrophil migration"/>
    <property type="evidence" value="ECO:0000318"/>
    <property type="project" value="GO_Central"/>
</dbReference>
<dbReference type="FunFam" id="2.60.40.4100:FF:000001">
    <property type="entry name" value="alpha-tectorin isoform X1"/>
    <property type="match status" value="1"/>
</dbReference>
<dbReference type="FunFam" id="2.60.40.3210:FF:000003">
    <property type="entry name" value="Glycoprotein 2"/>
    <property type="match status" value="1"/>
</dbReference>
<dbReference type="Gene3D" id="2.60.40.4100">
    <property type="entry name" value="Zona pellucida, ZP-C domain"/>
    <property type="match status" value="1"/>
</dbReference>
<dbReference type="Gene3D" id="2.60.40.3210">
    <property type="entry name" value="Zona pellucida, ZP-N domain"/>
    <property type="match status" value="1"/>
</dbReference>
<dbReference type="InterPro" id="IPR055355">
    <property type="entry name" value="ZP-C"/>
</dbReference>
<dbReference type="InterPro" id="IPR042235">
    <property type="entry name" value="ZP-C_dom"/>
</dbReference>
<dbReference type="InterPro" id="IPR055356">
    <property type="entry name" value="ZP-N"/>
</dbReference>
<dbReference type="InterPro" id="IPR048290">
    <property type="entry name" value="ZP_chr"/>
</dbReference>
<dbReference type="InterPro" id="IPR001507">
    <property type="entry name" value="ZP_dom"/>
</dbReference>
<dbReference type="InterPro" id="IPR017977">
    <property type="entry name" value="ZP_dom_CS"/>
</dbReference>
<dbReference type="PANTHER" id="PTHR14002">
    <property type="entry name" value="ENDOGLIN/TGF-BETA RECEPTOR TYPE III"/>
    <property type="match status" value="1"/>
</dbReference>
<dbReference type="PANTHER" id="PTHR14002:SF16">
    <property type="entry name" value="PANCREATIC SECRETORY GRANULE MEMBRANE MAJOR GLYCOPROTEIN GP2"/>
    <property type="match status" value="1"/>
</dbReference>
<dbReference type="Pfam" id="PF23283">
    <property type="entry name" value="D8C_UMOD"/>
    <property type="match status" value="1"/>
</dbReference>
<dbReference type="Pfam" id="PF00100">
    <property type="entry name" value="Zona_pellucida"/>
    <property type="match status" value="1"/>
</dbReference>
<dbReference type="Pfam" id="PF23344">
    <property type="entry name" value="ZP-N"/>
    <property type="match status" value="1"/>
</dbReference>
<dbReference type="PRINTS" id="PR00023">
    <property type="entry name" value="ZPELLUCIDA"/>
</dbReference>
<dbReference type="SMART" id="SM00241">
    <property type="entry name" value="ZP"/>
    <property type="match status" value="1"/>
</dbReference>
<dbReference type="PROSITE" id="PS00682">
    <property type="entry name" value="ZP_1"/>
    <property type="match status" value="1"/>
</dbReference>
<dbReference type="PROSITE" id="PS51034">
    <property type="entry name" value="ZP_2"/>
    <property type="match status" value="1"/>
</dbReference>
<gene>
    <name evidence="3" type="primary">GP2</name>
</gene>
<organism>
    <name type="scientific">Canis lupus familiaris</name>
    <name type="common">Dog</name>
    <name type="synonym">Canis familiaris</name>
    <dbReference type="NCBI Taxonomy" id="9615"/>
    <lineage>
        <taxon>Eukaryota</taxon>
        <taxon>Metazoa</taxon>
        <taxon>Chordata</taxon>
        <taxon>Craniata</taxon>
        <taxon>Vertebrata</taxon>
        <taxon>Euteleostomi</taxon>
        <taxon>Mammalia</taxon>
        <taxon>Eutheria</taxon>
        <taxon>Laurasiatheria</taxon>
        <taxon>Carnivora</taxon>
        <taxon>Caniformia</taxon>
        <taxon>Canidae</taxon>
        <taxon>Canis</taxon>
    </lineage>
</organism>
<keyword id="KW-1003">Cell membrane</keyword>
<keyword id="KW-0968">Cytoplasmic vesicle</keyword>
<keyword id="KW-0903">Direct protein sequencing</keyword>
<keyword id="KW-1015">Disulfide bond</keyword>
<keyword id="KW-0245">EGF-like domain</keyword>
<keyword id="KW-0967">Endosome</keyword>
<keyword id="KW-0325">Glycoprotein</keyword>
<keyword id="KW-0336">GPI-anchor</keyword>
<keyword id="KW-0391">Immunity</keyword>
<keyword id="KW-0399">Innate immunity</keyword>
<keyword id="KW-0449">Lipoprotein</keyword>
<keyword id="KW-0472">Membrane</keyword>
<keyword id="KW-0675">Receptor</keyword>
<keyword id="KW-1185">Reference proteome</keyword>
<keyword id="KW-0964">Secreted</keyword>
<keyword id="KW-0732">Signal</keyword>